<protein>
    <recommendedName>
        <fullName evidence="1">Protein PsiE homolog</fullName>
    </recommendedName>
</protein>
<feature type="chain" id="PRO_1000064324" description="Protein PsiE homolog">
    <location>
        <begin position="1"/>
        <end position="135"/>
    </location>
</feature>
<feature type="transmembrane region" description="Helical" evidence="1">
    <location>
        <begin position="20"/>
        <end position="40"/>
    </location>
</feature>
<feature type="transmembrane region" description="Helical" evidence="1">
    <location>
        <begin position="54"/>
        <end position="74"/>
    </location>
</feature>
<feature type="transmembrane region" description="Helical" evidence="1">
    <location>
        <begin position="82"/>
        <end position="102"/>
    </location>
</feature>
<feature type="transmembrane region" description="Helical" evidence="1">
    <location>
        <begin position="107"/>
        <end position="127"/>
    </location>
</feature>
<comment type="subcellular location">
    <subcellularLocation>
        <location evidence="1">Cell inner membrane</location>
        <topology evidence="1">Multi-pass membrane protein</topology>
    </subcellularLocation>
</comment>
<comment type="similarity">
    <text evidence="1">Belongs to the PsiE family.</text>
</comment>
<evidence type="ECO:0000255" key="1">
    <source>
        <dbReference type="HAMAP-Rule" id="MF_01048"/>
    </source>
</evidence>
<keyword id="KW-0997">Cell inner membrane</keyword>
<keyword id="KW-1003">Cell membrane</keyword>
<keyword id="KW-0472">Membrane</keyword>
<keyword id="KW-0812">Transmembrane</keyword>
<keyword id="KW-1133">Transmembrane helix</keyword>
<organism>
    <name type="scientific">Yersinia pestis bv. Antiqua (strain Antiqua)</name>
    <dbReference type="NCBI Taxonomy" id="360102"/>
    <lineage>
        <taxon>Bacteria</taxon>
        <taxon>Pseudomonadati</taxon>
        <taxon>Pseudomonadota</taxon>
        <taxon>Gammaproteobacteria</taxon>
        <taxon>Enterobacterales</taxon>
        <taxon>Yersiniaceae</taxon>
        <taxon>Yersinia</taxon>
    </lineage>
</organism>
<reference key="1">
    <citation type="journal article" date="2006" name="J. Bacteriol.">
        <title>Complete genome sequence of Yersinia pestis strains Antiqua and Nepal516: evidence of gene reduction in an emerging pathogen.</title>
        <authorList>
            <person name="Chain P.S.G."/>
            <person name="Hu P."/>
            <person name="Malfatti S.A."/>
            <person name="Radnedge L."/>
            <person name="Larimer F."/>
            <person name="Vergez L.M."/>
            <person name="Worsham P."/>
            <person name="Chu M.C."/>
            <person name="Andersen G.L."/>
        </authorList>
    </citation>
    <scope>NUCLEOTIDE SEQUENCE [LARGE SCALE GENOMIC DNA]</scope>
    <source>
        <strain>Antiqua</strain>
    </source>
</reference>
<accession>Q1CC26</accession>
<gene>
    <name evidence="1" type="primary">psiE</name>
    <name type="ordered locus">YPA_0027</name>
</gene>
<sequence>MAKNSRSQWIAKNLQRLLNVGLIMLAAILVVFLVKETIHLGKVLFLSNQETSSYMLIEGIVIYFLYFEFIALIVKYFESGYHFPLRYFIYIGITAIIRLIIVDHENPIDTLIYSGSILVLVVTLYLANTERLKRE</sequence>
<name>PSIE_YERPA</name>
<dbReference type="EMBL" id="CP000308">
    <property type="protein sequence ID" value="ABG11996.1"/>
    <property type="molecule type" value="Genomic_DNA"/>
</dbReference>
<dbReference type="RefSeq" id="WP_002212086.1">
    <property type="nucleotide sequence ID" value="NZ_CP009906.1"/>
</dbReference>
<dbReference type="SMR" id="Q1CC26"/>
<dbReference type="GeneID" id="96663139"/>
<dbReference type="KEGG" id="ypa:YPA_0027"/>
<dbReference type="Proteomes" id="UP000001971">
    <property type="component" value="Chromosome"/>
</dbReference>
<dbReference type="GO" id="GO:0005886">
    <property type="term" value="C:plasma membrane"/>
    <property type="evidence" value="ECO:0007669"/>
    <property type="project" value="UniProtKB-SubCell"/>
</dbReference>
<dbReference type="GO" id="GO:0016036">
    <property type="term" value="P:cellular response to phosphate starvation"/>
    <property type="evidence" value="ECO:0007669"/>
    <property type="project" value="InterPro"/>
</dbReference>
<dbReference type="HAMAP" id="MF_01048">
    <property type="entry name" value="PsiE"/>
    <property type="match status" value="1"/>
</dbReference>
<dbReference type="InterPro" id="IPR009315">
    <property type="entry name" value="P_starv_induced_PsiE"/>
</dbReference>
<dbReference type="InterPro" id="IPR020948">
    <property type="entry name" value="P_starv_induced_PsiE-like"/>
</dbReference>
<dbReference type="NCBIfam" id="NF002764">
    <property type="entry name" value="PRK02833.1-2"/>
    <property type="match status" value="1"/>
</dbReference>
<dbReference type="NCBIfam" id="NF002765">
    <property type="entry name" value="PRK02833.1-3"/>
    <property type="match status" value="1"/>
</dbReference>
<dbReference type="PANTHER" id="PTHR37819">
    <property type="entry name" value="PROTEIN PSIE"/>
    <property type="match status" value="1"/>
</dbReference>
<dbReference type="PANTHER" id="PTHR37819:SF1">
    <property type="entry name" value="PROTEIN PSIE"/>
    <property type="match status" value="1"/>
</dbReference>
<dbReference type="Pfam" id="PF06146">
    <property type="entry name" value="PsiE"/>
    <property type="match status" value="1"/>
</dbReference>
<dbReference type="PIRSF" id="PIRSF029598">
    <property type="entry name" value="PsiE"/>
    <property type="match status" value="1"/>
</dbReference>
<proteinExistence type="inferred from homology"/>